<comment type="function">
    <text evidence="1">Negative regulator of store-operated Ca(2+) entry (SOCE) involved in protecting cells from Ca(2+) overfilling. In response to cytosolic Ca(2+) elevation after endoplasmic reticulum Ca(2+) refilling, promotes a slow inactivation of STIM (stim1 or stim2)-dependent SOCE activity (By similarity).</text>
</comment>
<comment type="subcellular location">
    <subcellularLocation>
        <location evidence="1">Endoplasmic reticulum membrane</location>
        <topology evidence="1">Single-pass type I membrane protein</topology>
    </subcellularLocation>
    <text evidence="1">Translocates to the endoplasmic reticulum-plasma membrane (ER-PM) region in a STIM1-dependent manner following cytosolic Ca(2+) elevation.</text>
</comment>
<comment type="similarity">
    <text evidence="4">Belongs to the SARAF family.</text>
</comment>
<comment type="sequence caution" evidence="4">
    <conflict type="erroneous initiation">
        <sequence resource="EMBL-CDS" id="AAI23171"/>
    </conflict>
    <text>Truncated N-terminus.</text>
</comment>
<evidence type="ECO:0000250" key="1"/>
<evidence type="ECO:0000255" key="2"/>
<evidence type="ECO:0000256" key="3">
    <source>
        <dbReference type="SAM" id="MobiDB-lite"/>
    </source>
</evidence>
<evidence type="ECO:0000305" key="4"/>
<accession>Q0IHF9</accession>
<keyword id="KW-0106">Calcium</keyword>
<keyword id="KW-0109">Calcium transport</keyword>
<keyword id="KW-0256">Endoplasmic reticulum</keyword>
<keyword id="KW-0406">Ion transport</keyword>
<keyword id="KW-0472">Membrane</keyword>
<keyword id="KW-1185">Reference proteome</keyword>
<keyword id="KW-0732">Signal</keyword>
<keyword id="KW-0812">Transmembrane</keyword>
<keyword id="KW-1133">Transmembrane helix</keyword>
<keyword id="KW-0813">Transport</keyword>
<organism>
    <name type="scientific">Xenopus laevis</name>
    <name type="common">African clawed frog</name>
    <dbReference type="NCBI Taxonomy" id="8355"/>
    <lineage>
        <taxon>Eukaryota</taxon>
        <taxon>Metazoa</taxon>
        <taxon>Chordata</taxon>
        <taxon>Craniata</taxon>
        <taxon>Vertebrata</taxon>
        <taxon>Euteleostomi</taxon>
        <taxon>Amphibia</taxon>
        <taxon>Batrachia</taxon>
        <taxon>Anura</taxon>
        <taxon>Pipoidea</taxon>
        <taxon>Pipidae</taxon>
        <taxon>Xenopodinae</taxon>
        <taxon>Xenopus</taxon>
        <taxon>Xenopus</taxon>
    </lineage>
</organism>
<name>SARAF_XENLA</name>
<reference key="1">
    <citation type="submission" date="2006-09" db="EMBL/GenBank/DDBJ databases">
        <authorList>
            <consortium name="NIH - Xenopus Gene Collection (XGC) project"/>
        </authorList>
    </citation>
    <scope>NUCLEOTIDE SEQUENCE [LARGE SCALE MRNA]</scope>
    <source>
        <tissue>Fat body</tissue>
    </source>
</reference>
<sequence length="303" mass="33824">MTNMWTLLLLPFFAMLQVHYAWCWSPQDRVLLRDIQTITLYADRYTNARRSAPVPQLKCIGGNAGCHAMVPQVVQCHNRGWDGLDVQWECRVDMDNSYRFGKVEVSCEGFDFPEDPYVLRGSCGLEYTLELTEEGRKRTQDGYRSAGFGSGYFQSNSQSWDSKTDGSSAIVLIFIVILAYGVYKLFLSGPSVQQHPRPDEYGYDHQSQTHSSAPPPGFKSDFTGFSSGYGTGHVNQGPGFWTGLGTGGVLGYLFGNRRAQPYQSPYFNTWTGPSHSESMHQNDRPPQSSGVRTASGFGGTKRR</sequence>
<gene>
    <name type="primary">saraf</name>
    <name type="synonym">tmem66</name>
</gene>
<protein>
    <recommendedName>
        <fullName>Store-operated calcium entry-associated regulatory factor</fullName>
        <shortName>SARAF</shortName>
        <shortName>SOCE-associated regulatory factor</shortName>
    </recommendedName>
    <alternativeName>
        <fullName>Transmembrane protein 66</fullName>
    </alternativeName>
</protein>
<feature type="signal peptide" evidence="2">
    <location>
        <begin position="1"/>
        <end position="23"/>
    </location>
</feature>
<feature type="chain" id="PRO_0000417517" description="Store-operated calcium entry-associated regulatory factor">
    <location>
        <begin position="24"/>
        <end position="303"/>
    </location>
</feature>
<feature type="topological domain" description="Lumenal" evidence="2">
    <location>
        <begin position="24"/>
        <end position="168"/>
    </location>
</feature>
<feature type="transmembrane region" description="Helical" evidence="2">
    <location>
        <begin position="169"/>
        <end position="189"/>
    </location>
</feature>
<feature type="topological domain" description="Cytoplasmic" evidence="2">
    <location>
        <begin position="190"/>
        <end position="303"/>
    </location>
</feature>
<feature type="region of interest" description="Disordered" evidence="3">
    <location>
        <begin position="195"/>
        <end position="224"/>
    </location>
</feature>
<feature type="region of interest" description="Disordered" evidence="3">
    <location>
        <begin position="265"/>
        <end position="303"/>
    </location>
</feature>
<feature type="compositionally biased region" description="Polar residues" evidence="3">
    <location>
        <begin position="265"/>
        <end position="276"/>
    </location>
</feature>
<proteinExistence type="evidence at transcript level"/>
<dbReference type="EMBL" id="BC123170">
    <property type="protein sequence ID" value="AAI23171.1"/>
    <property type="status" value="ALT_INIT"/>
    <property type="molecule type" value="mRNA"/>
</dbReference>
<dbReference type="RefSeq" id="NP_001090323.1">
    <property type="nucleotide sequence ID" value="NM_001096854.1"/>
</dbReference>
<dbReference type="SMR" id="Q0IHF9"/>
<dbReference type="DNASU" id="779232"/>
<dbReference type="GeneID" id="779232"/>
<dbReference type="KEGG" id="xla:779232"/>
<dbReference type="AGR" id="Xenbase:XB-GENE-997093"/>
<dbReference type="CTD" id="779232"/>
<dbReference type="Xenbase" id="XB-GENE-997093">
    <property type="gene designation" value="saraf.S"/>
</dbReference>
<dbReference type="OrthoDB" id="20303at2759"/>
<dbReference type="Proteomes" id="UP000186698">
    <property type="component" value="Chromosome 1S"/>
</dbReference>
<dbReference type="Bgee" id="779232">
    <property type="expression patterns" value="Expressed in blastula and 19 other cell types or tissues"/>
</dbReference>
<dbReference type="GO" id="GO:0005789">
    <property type="term" value="C:endoplasmic reticulum membrane"/>
    <property type="evidence" value="ECO:0000250"/>
    <property type="project" value="UniProtKB"/>
</dbReference>
<dbReference type="GO" id="GO:0140268">
    <property type="term" value="C:endoplasmic reticulum-plasma membrane contact site"/>
    <property type="evidence" value="ECO:0000250"/>
    <property type="project" value="UniProtKB"/>
</dbReference>
<dbReference type="GO" id="GO:0006816">
    <property type="term" value="P:calcium ion transport"/>
    <property type="evidence" value="ECO:0007669"/>
    <property type="project" value="UniProtKB-KW"/>
</dbReference>
<dbReference type="GO" id="GO:2001256">
    <property type="term" value="P:regulation of store-operated calcium entry"/>
    <property type="evidence" value="ECO:0000250"/>
    <property type="project" value="UniProtKB"/>
</dbReference>
<dbReference type="InterPro" id="IPR009567">
    <property type="entry name" value="SARAF"/>
</dbReference>
<dbReference type="PANTHER" id="PTHR15929">
    <property type="entry name" value="STORE-OPERATED CALCIUM ENTRY-ASSOCIATED REGULATORY FACTOR"/>
    <property type="match status" value="1"/>
</dbReference>
<dbReference type="PANTHER" id="PTHR15929:SF0">
    <property type="entry name" value="STORE-OPERATED CALCIUM ENTRY-ASSOCIATED REGULATORY FACTOR"/>
    <property type="match status" value="1"/>
</dbReference>
<dbReference type="Pfam" id="PF06682">
    <property type="entry name" value="SARAF"/>
    <property type="match status" value="1"/>
</dbReference>